<proteinExistence type="evidence at protein level"/>
<dbReference type="EC" id="2.7.11.22"/>
<dbReference type="EMBL" id="Y15057">
    <property type="protein sequence ID" value="CAA75342.1"/>
    <property type="molecule type" value="mRNA"/>
</dbReference>
<dbReference type="EMBL" id="AY217744">
    <property type="protein sequence ID" value="AAO64440.1"/>
    <property type="molecule type" value="mRNA"/>
</dbReference>
<dbReference type="EMBL" id="HQ171445">
    <property type="protein sequence ID" value="ADN38258.1"/>
    <property type="molecule type" value="mRNA"/>
</dbReference>
<dbReference type="EMBL" id="Z92542">
    <property type="status" value="NOT_ANNOTATED_CDS"/>
    <property type="molecule type" value="Genomic_DNA"/>
</dbReference>
<dbReference type="EMBL" id="AL109798">
    <property type="status" value="NOT_ANNOTATED_CDS"/>
    <property type="molecule type" value="Genomic_DNA"/>
</dbReference>
<dbReference type="EMBL" id="X89059">
    <property type="protein sequence ID" value="CAA61445.1"/>
    <property type="status" value="ALT_FRAME"/>
    <property type="molecule type" value="mRNA"/>
</dbReference>
<dbReference type="CCDS" id="CCDS14186.1">
    <molecule id="O76039-1"/>
</dbReference>
<dbReference type="CCDS" id="CCDS83458.1">
    <molecule id="O76039-2"/>
</dbReference>
<dbReference type="PIR" id="S58296">
    <property type="entry name" value="S58296"/>
</dbReference>
<dbReference type="RefSeq" id="NP_001032420.1">
    <molecule id="O76039-1"/>
    <property type="nucleotide sequence ID" value="NM_001037343.2"/>
</dbReference>
<dbReference type="RefSeq" id="NP_001310218.1">
    <molecule id="O76039-2"/>
    <property type="nucleotide sequence ID" value="NM_001323289.2"/>
</dbReference>
<dbReference type="RefSeq" id="NP_003150.1">
    <molecule id="O76039-1"/>
    <property type="nucleotide sequence ID" value="NM_003159.3"/>
</dbReference>
<dbReference type="PDB" id="4BGQ">
    <property type="method" value="X-ray"/>
    <property type="resolution" value="2.00 A"/>
    <property type="chains" value="A=1-303"/>
</dbReference>
<dbReference type="PDB" id="8CIE">
    <property type="method" value="X-ray"/>
    <property type="resolution" value="2.20 A"/>
    <property type="chains" value="A=1-303"/>
</dbReference>
<dbReference type="PDBsum" id="4BGQ"/>
<dbReference type="PDBsum" id="8CIE"/>
<dbReference type="SMR" id="O76039"/>
<dbReference type="BioGRID" id="112668">
    <property type="interactions" value="30"/>
</dbReference>
<dbReference type="FunCoup" id="O76039">
    <property type="interactions" value="618"/>
</dbReference>
<dbReference type="IntAct" id="O76039">
    <property type="interactions" value="24"/>
</dbReference>
<dbReference type="MINT" id="O76039"/>
<dbReference type="STRING" id="9606.ENSP00000369325"/>
<dbReference type="BindingDB" id="O76039"/>
<dbReference type="ChEMBL" id="CHEMBL1163112"/>
<dbReference type="DrugCentral" id="O76039"/>
<dbReference type="GlyGen" id="O76039">
    <property type="glycosylation" value="3 sites, 1 O-linked glycan (2 sites)"/>
</dbReference>
<dbReference type="iPTMnet" id="O76039"/>
<dbReference type="PhosphoSitePlus" id="O76039"/>
<dbReference type="BioMuta" id="CDKL5"/>
<dbReference type="CPTAC" id="non-CPTAC-3105"/>
<dbReference type="CPTAC" id="non-CPTAC-3106"/>
<dbReference type="jPOST" id="O76039"/>
<dbReference type="MassIVE" id="O76039"/>
<dbReference type="PaxDb" id="9606-ENSP00000369325"/>
<dbReference type="PeptideAtlas" id="O76039"/>
<dbReference type="ProteomicsDB" id="50359">
    <molecule id="O76039-1"/>
</dbReference>
<dbReference type="Pumba" id="O76039"/>
<dbReference type="Antibodypedia" id="481">
    <property type="antibodies" value="234 antibodies from 32 providers"/>
</dbReference>
<dbReference type="DNASU" id="6792"/>
<dbReference type="Ensembl" id="ENST00000379989.6">
    <molecule id="O76039-1"/>
    <property type="protein sequence ID" value="ENSP00000369325.3"/>
    <property type="gene ID" value="ENSG00000008086.13"/>
</dbReference>
<dbReference type="Ensembl" id="ENST00000379996.7">
    <molecule id="O76039-1"/>
    <property type="protein sequence ID" value="ENSP00000369332.3"/>
    <property type="gene ID" value="ENSG00000008086.13"/>
</dbReference>
<dbReference type="Ensembl" id="ENST00000623535.2">
    <molecule id="O76039-2"/>
    <property type="protein sequence ID" value="ENSP00000485244.1"/>
    <property type="gene ID" value="ENSG00000008086.13"/>
</dbReference>
<dbReference type="GeneID" id="6792"/>
<dbReference type="KEGG" id="hsa:6792"/>
<dbReference type="MANE-Select" id="ENST00000623535.2">
    <property type="protein sequence ID" value="ENSP00000485244.1"/>
    <property type="RefSeq nucleotide sequence ID" value="NM_001323289.2"/>
    <property type="RefSeq protein sequence ID" value="NP_001310218.1"/>
</dbReference>
<dbReference type="UCSC" id="uc004cym.4">
    <molecule id="O76039-2"/>
    <property type="organism name" value="human"/>
</dbReference>
<dbReference type="AGR" id="HGNC:11411"/>
<dbReference type="CTD" id="6792"/>
<dbReference type="DisGeNET" id="6792"/>
<dbReference type="GeneCards" id="CDKL5"/>
<dbReference type="GeneReviews" id="CDKL5"/>
<dbReference type="HGNC" id="HGNC:11411">
    <property type="gene designation" value="CDKL5"/>
</dbReference>
<dbReference type="HPA" id="ENSG00000008086">
    <property type="expression patterns" value="Tissue enhanced (brain)"/>
</dbReference>
<dbReference type="MalaCards" id="CDKL5"/>
<dbReference type="MIM" id="300203">
    <property type="type" value="gene"/>
</dbReference>
<dbReference type="MIM" id="300672">
    <property type="type" value="phenotype"/>
</dbReference>
<dbReference type="neXtProt" id="NX_O76039"/>
<dbReference type="OpenTargets" id="ENSG00000008086"/>
<dbReference type="PharmGKB" id="PA36218"/>
<dbReference type="VEuPathDB" id="HostDB:ENSG00000008086"/>
<dbReference type="eggNOG" id="KOG0593">
    <property type="taxonomic scope" value="Eukaryota"/>
</dbReference>
<dbReference type="GeneTree" id="ENSGT00940000157355"/>
<dbReference type="InParanoid" id="O76039"/>
<dbReference type="OMA" id="MQHARTS"/>
<dbReference type="OrthoDB" id="9929178at2759"/>
<dbReference type="PAN-GO" id="O76039">
    <property type="GO annotations" value="5 GO annotations based on evolutionary models"/>
</dbReference>
<dbReference type="PhylomeDB" id="O76039"/>
<dbReference type="TreeFam" id="TF101032"/>
<dbReference type="BRENDA" id="2.7.11.22">
    <property type="organism ID" value="2681"/>
</dbReference>
<dbReference type="PathwayCommons" id="O76039"/>
<dbReference type="SignaLink" id="O76039"/>
<dbReference type="SIGNOR" id="O76039"/>
<dbReference type="BioGRID-ORCS" id="6792">
    <property type="hits" value="12 hits in 807 CRISPR screens"/>
</dbReference>
<dbReference type="ChiTaRS" id="CDKL5">
    <property type="organism name" value="human"/>
</dbReference>
<dbReference type="EvolutionaryTrace" id="O76039"/>
<dbReference type="GeneWiki" id="CDKL5"/>
<dbReference type="GenomeRNAi" id="6792"/>
<dbReference type="Pharos" id="O76039">
    <property type="development level" value="Tchem"/>
</dbReference>
<dbReference type="PRO" id="PR:O76039"/>
<dbReference type="Proteomes" id="UP000005640">
    <property type="component" value="Chromosome X"/>
</dbReference>
<dbReference type="RNAct" id="O76039">
    <property type="molecule type" value="protein"/>
</dbReference>
<dbReference type="Bgee" id="ENSG00000008086">
    <property type="expression patterns" value="Expressed in frontal pole and 177 other cell types or tissues"/>
</dbReference>
<dbReference type="ExpressionAtlas" id="O76039">
    <property type="expression patterns" value="baseline and differential"/>
</dbReference>
<dbReference type="GO" id="GO:0005813">
    <property type="term" value="C:centrosome"/>
    <property type="evidence" value="ECO:0000314"/>
    <property type="project" value="UniProtKB"/>
</dbReference>
<dbReference type="GO" id="GO:0036064">
    <property type="term" value="C:ciliary basal body"/>
    <property type="evidence" value="ECO:0000314"/>
    <property type="project" value="UniProtKB"/>
</dbReference>
<dbReference type="GO" id="GO:0097542">
    <property type="term" value="C:ciliary tip"/>
    <property type="evidence" value="ECO:0000314"/>
    <property type="project" value="UniProtKB"/>
</dbReference>
<dbReference type="GO" id="GO:0032839">
    <property type="term" value="C:dendrite cytoplasm"/>
    <property type="evidence" value="ECO:0000250"/>
    <property type="project" value="BHF-UCL"/>
</dbReference>
<dbReference type="GO" id="GO:0044294">
    <property type="term" value="C:dendritic growth cone"/>
    <property type="evidence" value="ECO:0000250"/>
    <property type="project" value="BHF-UCL"/>
</dbReference>
<dbReference type="GO" id="GO:0098978">
    <property type="term" value="C:glutamatergic synapse"/>
    <property type="evidence" value="ECO:0000314"/>
    <property type="project" value="SynGO"/>
</dbReference>
<dbReference type="GO" id="GO:0005654">
    <property type="term" value="C:nucleoplasm"/>
    <property type="evidence" value="ECO:0000314"/>
    <property type="project" value="HPA"/>
</dbReference>
<dbReference type="GO" id="GO:0005634">
    <property type="term" value="C:nucleus"/>
    <property type="evidence" value="ECO:0000314"/>
    <property type="project" value="HGNC-UCL"/>
</dbReference>
<dbReference type="GO" id="GO:0005524">
    <property type="term" value="F:ATP binding"/>
    <property type="evidence" value="ECO:0000314"/>
    <property type="project" value="HGNC-UCL"/>
</dbReference>
<dbReference type="GO" id="GO:0004693">
    <property type="term" value="F:cyclin-dependent protein serine/threonine kinase activity"/>
    <property type="evidence" value="ECO:0007669"/>
    <property type="project" value="UniProtKB-EC"/>
</dbReference>
<dbReference type="GO" id="GO:0016301">
    <property type="term" value="F:kinase activity"/>
    <property type="evidence" value="ECO:0000314"/>
    <property type="project" value="MGI"/>
</dbReference>
<dbReference type="GO" id="GO:0004672">
    <property type="term" value="F:protein kinase activity"/>
    <property type="evidence" value="ECO:0000314"/>
    <property type="project" value="HGNC-UCL"/>
</dbReference>
<dbReference type="GO" id="GO:0106310">
    <property type="term" value="F:protein serine kinase activity"/>
    <property type="evidence" value="ECO:0007669"/>
    <property type="project" value="RHEA"/>
</dbReference>
<dbReference type="GO" id="GO:0004674">
    <property type="term" value="F:protein serine/threonine kinase activity"/>
    <property type="evidence" value="ECO:0000304"/>
    <property type="project" value="ProtInc"/>
</dbReference>
<dbReference type="GO" id="GO:0031267">
    <property type="term" value="F:small GTPase binding"/>
    <property type="evidence" value="ECO:0000250"/>
    <property type="project" value="BHF-UCL"/>
</dbReference>
<dbReference type="GO" id="GO:0050804">
    <property type="term" value="P:modulation of chemical synaptic transmission"/>
    <property type="evidence" value="ECO:0000314"/>
    <property type="project" value="SynGO"/>
</dbReference>
<dbReference type="GO" id="GO:0001764">
    <property type="term" value="P:neuron migration"/>
    <property type="evidence" value="ECO:0000250"/>
    <property type="project" value="BHF-UCL"/>
</dbReference>
<dbReference type="GO" id="GO:0045773">
    <property type="term" value="P:positive regulation of axon extension"/>
    <property type="evidence" value="ECO:0000250"/>
    <property type="project" value="BHF-UCL"/>
</dbReference>
<dbReference type="GO" id="GO:0050775">
    <property type="term" value="P:positive regulation of dendrite morphogenesis"/>
    <property type="evidence" value="ECO:0000250"/>
    <property type="project" value="BHF-UCL"/>
</dbReference>
<dbReference type="GO" id="GO:0035022">
    <property type="term" value="P:positive regulation of Rac protein signal transduction"/>
    <property type="evidence" value="ECO:0000250"/>
    <property type="project" value="BHF-UCL"/>
</dbReference>
<dbReference type="GO" id="GO:1902017">
    <property type="term" value="P:regulation of cilium assembly"/>
    <property type="evidence" value="ECO:0000315"/>
    <property type="project" value="UniProtKB"/>
</dbReference>
<dbReference type="GO" id="GO:0050773">
    <property type="term" value="P:regulation of dendrite development"/>
    <property type="evidence" value="ECO:0000250"/>
    <property type="project" value="BHF-UCL"/>
</dbReference>
<dbReference type="GO" id="GO:0099175">
    <property type="term" value="P:regulation of postsynapse organization"/>
    <property type="evidence" value="ECO:0000314"/>
    <property type="project" value="SynGO"/>
</dbReference>
<dbReference type="CDD" id="cd07848">
    <property type="entry name" value="STKc_CDKL5"/>
    <property type="match status" value="1"/>
</dbReference>
<dbReference type="FunFam" id="3.30.200.20:FF:001093">
    <property type="entry name" value="Cyclin-dependent kinase-like 5"/>
    <property type="match status" value="1"/>
</dbReference>
<dbReference type="FunFam" id="1.10.510.10:FF:000127">
    <property type="entry name" value="Putative cyclin-dependent kinase-like 5"/>
    <property type="match status" value="1"/>
</dbReference>
<dbReference type="Gene3D" id="3.30.200.20">
    <property type="entry name" value="Phosphorylase Kinase, domain 1"/>
    <property type="match status" value="1"/>
</dbReference>
<dbReference type="Gene3D" id="1.10.510.10">
    <property type="entry name" value="Transferase(Phosphotransferase) domain 1"/>
    <property type="match status" value="1"/>
</dbReference>
<dbReference type="InterPro" id="IPR050108">
    <property type="entry name" value="CDK"/>
</dbReference>
<dbReference type="InterPro" id="IPR011009">
    <property type="entry name" value="Kinase-like_dom_sf"/>
</dbReference>
<dbReference type="InterPro" id="IPR000719">
    <property type="entry name" value="Prot_kinase_dom"/>
</dbReference>
<dbReference type="InterPro" id="IPR017441">
    <property type="entry name" value="Protein_kinase_ATP_BS"/>
</dbReference>
<dbReference type="InterPro" id="IPR008271">
    <property type="entry name" value="Ser/Thr_kinase_AS"/>
</dbReference>
<dbReference type="PANTHER" id="PTHR24056">
    <property type="entry name" value="CELL DIVISION PROTEIN KINASE"/>
    <property type="match status" value="1"/>
</dbReference>
<dbReference type="PANTHER" id="PTHR24056:SF111">
    <property type="entry name" value="CYCLIN-DEPENDENT KINASE-LIKE 5"/>
    <property type="match status" value="1"/>
</dbReference>
<dbReference type="Pfam" id="PF00069">
    <property type="entry name" value="Pkinase"/>
    <property type="match status" value="1"/>
</dbReference>
<dbReference type="SMART" id="SM00220">
    <property type="entry name" value="S_TKc"/>
    <property type="match status" value="1"/>
</dbReference>
<dbReference type="SUPFAM" id="SSF56112">
    <property type="entry name" value="Protein kinase-like (PK-like)"/>
    <property type="match status" value="1"/>
</dbReference>
<dbReference type="PROSITE" id="PS00107">
    <property type="entry name" value="PROTEIN_KINASE_ATP"/>
    <property type="match status" value="1"/>
</dbReference>
<dbReference type="PROSITE" id="PS50011">
    <property type="entry name" value="PROTEIN_KINASE_DOM"/>
    <property type="match status" value="1"/>
</dbReference>
<dbReference type="PROSITE" id="PS00108">
    <property type="entry name" value="PROTEIN_KINASE_ST"/>
    <property type="match status" value="1"/>
</dbReference>
<protein>
    <recommendedName>
        <fullName evidence="27">Cyclin-dependent kinase-like 5</fullName>
        <ecNumber>2.7.11.22</ecNumber>
    </recommendedName>
    <alternativeName>
        <fullName>Serine/threonine-protein kinase 9</fullName>
    </alternativeName>
</protein>
<keyword id="KW-0002">3D-structure</keyword>
<keyword id="KW-0025">Alternative splicing</keyword>
<keyword id="KW-0067">ATP-binding</keyword>
<keyword id="KW-0966">Cell projection</keyword>
<keyword id="KW-0160">Chromosomal rearrangement</keyword>
<keyword id="KW-0963">Cytoplasm</keyword>
<keyword id="KW-0206">Cytoskeleton</keyword>
<keyword id="KW-0225">Disease variant</keyword>
<keyword id="KW-0887">Epilepsy</keyword>
<keyword id="KW-0991">Intellectual disability</keyword>
<keyword id="KW-0418">Kinase</keyword>
<keyword id="KW-0547">Nucleotide-binding</keyword>
<keyword id="KW-0539">Nucleus</keyword>
<keyword id="KW-0597">Phosphoprotein</keyword>
<keyword id="KW-1267">Proteomics identification</keyword>
<keyword id="KW-1185">Reference proteome</keyword>
<keyword id="KW-0723">Serine/threonine-protein kinase</keyword>
<keyword id="KW-0808">Transferase</keyword>
<gene>
    <name evidence="28" type="primary">CDKL5</name>
    <name type="synonym">STK9</name>
</gene>
<comment type="function">
    <text evidence="8 11 26">Mediates phosphorylation of MECP2 (PubMed:15917271, PubMed:16935860). May regulate ciliogenesis (PubMed:29420175).</text>
</comment>
<comment type="catalytic activity">
    <reaction>
        <text>L-seryl-[protein] + ATP = O-phospho-L-seryl-[protein] + ADP + H(+)</text>
        <dbReference type="Rhea" id="RHEA:17989"/>
        <dbReference type="Rhea" id="RHEA-COMP:9863"/>
        <dbReference type="Rhea" id="RHEA-COMP:11604"/>
        <dbReference type="ChEBI" id="CHEBI:15378"/>
        <dbReference type="ChEBI" id="CHEBI:29999"/>
        <dbReference type="ChEBI" id="CHEBI:30616"/>
        <dbReference type="ChEBI" id="CHEBI:83421"/>
        <dbReference type="ChEBI" id="CHEBI:456216"/>
        <dbReference type="EC" id="2.7.11.22"/>
    </reaction>
</comment>
<comment type="catalytic activity">
    <reaction>
        <text>L-threonyl-[protein] + ATP = O-phospho-L-threonyl-[protein] + ADP + H(+)</text>
        <dbReference type="Rhea" id="RHEA:46608"/>
        <dbReference type="Rhea" id="RHEA-COMP:11060"/>
        <dbReference type="Rhea" id="RHEA-COMP:11605"/>
        <dbReference type="ChEBI" id="CHEBI:15378"/>
        <dbReference type="ChEBI" id="CHEBI:30013"/>
        <dbReference type="ChEBI" id="CHEBI:30616"/>
        <dbReference type="ChEBI" id="CHEBI:61977"/>
        <dbReference type="ChEBI" id="CHEBI:456216"/>
        <dbReference type="EC" id="2.7.11.22"/>
    </reaction>
</comment>
<comment type="subunit">
    <text evidence="8">Interacts with MECP2.</text>
</comment>
<comment type="interaction">
    <interactant intactId="EBI-1752465">
        <id>O76039</id>
    </interactant>
    <interactant intactId="EBI-618309">
        <id>Q08379</id>
        <label>GOLGA2</label>
    </interactant>
    <organismsDiffer>false</organismsDiffer>
    <experiments>3</experiments>
</comment>
<comment type="interaction">
    <interactant intactId="EBI-1752465">
        <id>O76039</id>
    </interactant>
    <interactant intactId="EBI-744248">
        <id>P40692</id>
        <label>MLH1</label>
    </interactant>
    <organismsDiffer>false</organismsDiffer>
    <experiments>4</experiments>
</comment>
<comment type="interaction">
    <interactant intactId="EBI-1752465">
        <id>O76039</id>
    </interactant>
    <interactant intactId="EBI-6916752">
        <id>P50452</id>
        <label>SERPINB8</label>
    </interactant>
    <organismsDiffer>false</organismsDiffer>
    <experiments>2</experiments>
</comment>
<comment type="subcellular location">
    <subcellularLocation>
        <location evidence="11">Nucleus</location>
    </subcellularLocation>
    <subcellularLocation>
        <location evidence="26">Cytoplasm</location>
        <location evidence="26">Cytoskeleton</location>
        <location evidence="26">Cilium basal body</location>
    </subcellularLocation>
    <subcellularLocation>
        <location evidence="26">Cytoplasm</location>
        <location evidence="26">Cytoskeleton</location>
        <location evidence="26">Microtubule organizing center</location>
        <location evidence="26">Centrosome</location>
    </subcellularLocation>
</comment>
<comment type="alternative products">
    <event type="alternative splicing"/>
    <isoform>
        <id>O76039-2</id>
        <name>1</name>
        <sequence type="displayed"/>
    </isoform>
    <isoform>
        <id>O76039-1</id>
        <name>2</name>
        <sequence type="described" ref="VSP_060755"/>
    </isoform>
</comment>
<comment type="tissue specificity">
    <text>Expressed in brain, lung, kidney, prostate, ovary, placenta, pancreas and testis.</text>
</comment>
<comment type="tissue specificity">
    <molecule>Isoform 2</molecule>
    <text evidence="19">Predominant transcript in brain.</text>
</comment>
<comment type="PTM">
    <text>Autophosphorylated.</text>
</comment>
<comment type="disease">
    <text>Chromosomal aberrations involving CDKL5 are found in patients manifesting early-onset seizures and spams and psychomotor impairment. Translocation t(X;6)(p22.3;q14); translocation t(X;7)(p22.3;p15).</text>
</comment>
<comment type="disease" evidence="4 5 6 7 8 9 10 11 14 15 16 17 18 20 21 22 24 25">
    <disease id="DI-00472">
        <name>Developmental and epileptic encephalopathy 2</name>
        <acronym>DEE2</acronym>
        <description>A severe form of epilepsy characterized by seizures or spasms beginning in infancy. Patients with epileptic encephalopathy early infantile type 2 manifest features resembling Rett syndrome such as microcephaly, lack of speech development, stereotypic hand movements. However, DEE2 and Rett syndrome are considered two distinct entities.</description>
        <dbReference type="MIM" id="300672"/>
    </disease>
    <text>The disease is caused by variants affecting the gene represented in this entry.</text>
</comment>
<comment type="similarity">
    <text evidence="27">Belongs to the protein kinase superfamily. CMGC Ser/Thr protein kinase family. CDC2/CDKX subfamily.</text>
</comment>
<comment type="caution">
    <text evidence="27">It is uncertain whether Met-1 or Met-10 is the initiator.</text>
</comment>
<comment type="sequence caution" evidence="27">
    <conflict type="frameshift">
        <sequence resource="EMBL-CDS" id="CAA61445"/>
    </conflict>
</comment>
<sequence>MKIPNIGNVMNKFEILGVVGEGAYGVVLKCRHKETHEIVAIKKFKDSEENEEVKETTLRELKMLRTLKQENIVELKEAFRRRGKLYLVFEYVEKNMLELLEEMPNGVPPEKVKSYIYQLIKAIHWCHKNDIVHRDIKPENLLISHNDVLKLCDFGFARNLSEGNNANYTEYVATRWYRSPELLLGAPYGKSVDMWSVGCILGELSDGQPLFPGESEIDQLFTIQKVLGPLPSEQMKLFYSNPRFHGLRFPAVNHPQSLERRYLGILNSVLLDLMKNLLKLDPADRYLTEQCLNHPTFQTQRLLDRSPSRSAKRKPYHVESSTLSNRNQAGKSTALQSHHRSNSKDIQNLSVGLPRADEGLPANESFLNGNLAGASLSPLHTKTYQASSQPGSTSKDLTNNNIPHLLSPKEAKSKTEFDFNIDPKPSEGPGTKYLKSNSRSQQNRHSFMESSQSKAGTLQPNEKQSRHSYIDTIPQSSRSPSYRTKAKSHGALSDSKSVSNLSEARAQIAEPSTSRYFPSSCLDLNSPTSPTPTRHSDTRTLLSPSGRNNRNEGTLDSRRTTTRHSKTMEELKLPEHMDSSHSHSLSAPHESFSYGLGYTSPFSSQQRPHRHSMYVTRDKVRAKGLDGSLSIGQGMAARANSLQLLSPQPGEQLPPEMTVARSSVKETSREGTSSFHTRQKSEGGVYHDPHSDDGTAPKENRHLYNDPVPRRVGSFYRVPSPRPDNSFHENNVSTRVSSLPSESSSGTNHSKRQPAFDPWKSPENISHSEQLKEKEKQGFFRSMKKKKKKSQTVPNSDSPDLLTLQKSIHSASTPSSRPKEWRPEKISDLQTQSQPLKSLRKLLHLSSASNHPASSDPRFQPLTAQQTKNSFSEIRIHPLSQASGGSSNIRQEPAPKGRPALQLPGQMDPGWHVSSVTRSATEGPSYSEQLGAKSGPNGHPYNRTNRSRMPNLNDLKETAL</sequence>
<reference key="1">
    <citation type="journal article" date="1998" name="Genomics">
        <title>Identification and characterization of a novel serine-threonine kinase gene from the Xp22 region.</title>
        <authorList>
            <person name="Montini E."/>
            <person name="Andolfi G."/>
            <person name="Caruso A."/>
            <person name="Buchner G."/>
            <person name="Walpole S.M."/>
            <person name="Mariani M."/>
            <person name="Consalez G.G."/>
            <person name="Trump D."/>
            <person name="Ballabio A."/>
            <person name="Franco B."/>
        </authorList>
    </citation>
    <scope>NUCLEOTIDE SEQUENCE [MRNA] (ISOFORM 2)</scope>
</reference>
<reference key="2">
    <citation type="journal article" date="2003" name="Am. J. Hum. Genet.">
        <title>Disruption of the serine/threonine kinase 9 gene causes severe X-linked infantile spasms and mental retardation.</title>
        <authorList>
            <person name="Kalscheuer V.M."/>
            <person name="Tao J."/>
            <person name="Donnelly A."/>
            <person name="Hollway G."/>
            <person name="Schwinger E."/>
            <person name="Kuebart S."/>
            <person name="Menzel C."/>
            <person name="Hoeltzenbein M."/>
            <person name="Tommerup N."/>
            <person name="Eyre H."/>
            <person name="Harbord M."/>
            <person name="Haan E."/>
            <person name="Sutherland G.R."/>
            <person name="Ropers H.-H."/>
            <person name="Gecz J."/>
        </authorList>
    </citation>
    <scope>NUCLEOTIDE SEQUENCE [MRNA] (ISOFORM 2)</scope>
    <scope>INVOLVEMENT IN DEE2</scope>
    <scope>CHROMOSOMAL TRANSLOCATION</scope>
    <scope>VARIANT PRO-791</scope>
</reference>
<reference key="3">
    <citation type="journal article" date="2012" name="Hum. Genet.">
        <title>A novel transcript of cyclin-dependent kinase-like 5 (CDKL5) has an alternative C-terminus and is the predominant transcript in brain.</title>
        <authorList>
            <person name="Williamson S.L."/>
            <person name="Giudici L."/>
            <person name="Kilstrup-Nielsen C."/>
            <person name="Gold W."/>
            <person name="Pelka G.J."/>
            <person name="Tam P.P."/>
            <person name="Grimm A."/>
            <person name="Prodi D."/>
            <person name="Landsberger N."/>
            <person name="Christodoulou J."/>
        </authorList>
    </citation>
    <scope>NUCLEOTIDE SEQUENCE [MRNA] (ISOFORM 1)</scope>
    <scope>ALTERNATIVE SPLICING</scope>
    <scope>TISSUE SPECIFICITY</scope>
</reference>
<reference key="4">
    <citation type="journal article" date="2005" name="Nature">
        <title>The DNA sequence of the human X chromosome.</title>
        <authorList>
            <person name="Ross M.T."/>
            <person name="Grafham D.V."/>
            <person name="Coffey A.J."/>
            <person name="Scherer S."/>
            <person name="McLay K."/>
            <person name="Muzny D."/>
            <person name="Platzer M."/>
            <person name="Howell G.R."/>
            <person name="Burrows C."/>
            <person name="Bird C.P."/>
            <person name="Frankish A."/>
            <person name="Lovell F.L."/>
            <person name="Howe K.L."/>
            <person name="Ashurst J.L."/>
            <person name="Fulton R.S."/>
            <person name="Sudbrak R."/>
            <person name="Wen G."/>
            <person name="Jones M.C."/>
            <person name="Hurles M.E."/>
            <person name="Andrews T.D."/>
            <person name="Scott C.E."/>
            <person name="Searle S."/>
            <person name="Ramser J."/>
            <person name="Whittaker A."/>
            <person name="Deadman R."/>
            <person name="Carter N.P."/>
            <person name="Hunt S.E."/>
            <person name="Chen R."/>
            <person name="Cree A."/>
            <person name="Gunaratne P."/>
            <person name="Havlak P."/>
            <person name="Hodgson A."/>
            <person name="Metzker M.L."/>
            <person name="Richards S."/>
            <person name="Scott G."/>
            <person name="Steffen D."/>
            <person name="Sodergren E."/>
            <person name="Wheeler D.A."/>
            <person name="Worley K.C."/>
            <person name="Ainscough R."/>
            <person name="Ambrose K.D."/>
            <person name="Ansari-Lari M.A."/>
            <person name="Aradhya S."/>
            <person name="Ashwell R.I."/>
            <person name="Babbage A.K."/>
            <person name="Bagguley C.L."/>
            <person name="Ballabio A."/>
            <person name="Banerjee R."/>
            <person name="Barker G.E."/>
            <person name="Barlow K.F."/>
            <person name="Barrett I.P."/>
            <person name="Bates K.N."/>
            <person name="Beare D.M."/>
            <person name="Beasley H."/>
            <person name="Beasley O."/>
            <person name="Beck A."/>
            <person name="Bethel G."/>
            <person name="Blechschmidt K."/>
            <person name="Brady N."/>
            <person name="Bray-Allen S."/>
            <person name="Bridgeman A.M."/>
            <person name="Brown A.J."/>
            <person name="Brown M.J."/>
            <person name="Bonnin D."/>
            <person name="Bruford E.A."/>
            <person name="Buhay C."/>
            <person name="Burch P."/>
            <person name="Burford D."/>
            <person name="Burgess J."/>
            <person name="Burrill W."/>
            <person name="Burton J."/>
            <person name="Bye J.M."/>
            <person name="Carder C."/>
            <person name="Carrel L."/>
            <person name="Chako J."/>
            <person name="Chapman J.C."/>
            <person name="Chavez D."/>
            <person name="Chen E."/>
            <person name="Chen G."/>
            <person name="Chen Y."/>
            <person name="Chen Z."/>
            <person name="Chinault C."/>
            <person name="Ciccodicola A."/>
            <person name="Clark S.Y."/>
            <person name="Clarke G."/>
            <person name="Clee C.M."/>
            <person name="Clegg S."/>
            <person name="Clerc-Blankenburg K."/>
            <person name="Clifford K."/>
            <person name="Cobley V."/>
            <person name="Cole C.G."/>
            <person name="Conquer J.S."/>
            <person name="Corby N."/>
            <person name="Connor R.E."/>
            <person name="David R."/>
            <person name="Davies J."/>
            <person name="Davis C."/>
            <person name="Davis J."/>
            <person name="Delgado O."/>
            <person name="Deshazo D."/>
            <person name="Dhami P."/>
            <person name="Ding Y."/>
            <person name="Dinh H."/>
            <person name="Dodsworth S."/>
            <person name="Draper H."/>
            <person name="Dugan-Rocha S."/>
            <person name="Dunham A."/>
            <person name="Dunn M."/>
            <person name="Durbin K.J."/>
            <person name="Dutta I."/>
            <person name="Eades T."/>
            <person name="Ellwood M."/>
            <person name="Emery-Cohen A."/>
            <person name="Errington H."/>
            <person name="Evans K.L."/>
            <person name="Faulkner L."/>
            <person name="Francis F."/>
            <person name="Frankland J."/>
            <person name="Fraser A.E."/>
            <person name="Galgoczy P."/>
            <person name="Gilbert J."/>
            <person name="Gill R."/>
            <person name="Gloeckner G."/>
            <person name="Gregory S.G."/>
            <person name="Gribble S."/>
            <person name="Griffiths C."/>
            <person name="Grocock R."/>
            <person name="Gu Y."/>
            <person name="Gwilliam R."/>
            <person name="Hamilton C."/>
            <person name="Hart E.A."/>
            <person name="Hawes A."/>
            <person name="Heath P.D."/>
            <person name="Heitmann K."/>
            <person name="Hennig S."/>
            <person name="Hernandez J."/>
            <person name="Hinzmann B."/>
            <person name="Ho S."/>
            <person name="Hoffs M."/>
            <person name="Howden P.J."/>
            <person name="Huckle E.J."/>
            <person name="Hume J."/>
            <person name="Hunt P.J."/>
            <person name="Hunt A.R."/>
            <person name="Isherwood J."/>
            <person name="Jacob L."/>
            <person name="Johnson D."/>
            <person name="Jones S."/>
            <person name="de Jong P.J."/>
            <person name="Joseph S.S."/>
            <person name="Keenan S."/>
            <person name="Kelly S."/>
            <person name="Kershaw J.K."/>
            <person name="Khan Z."/>
            <person name="Kioschis P."/>
            <person name="Klages S."/>
            <person name="Knights A.J."/>
            <person name="Kosiura A."/>
            <person name="Kovar-Smith C."/>
            <person name="Laird G.K."/>
            <person name="Langford C."/>
            <person name="Lawlor S."/>
            <person name="Leversha M."/>
            <person name="Lewis L."/>
            <person name="Liu W."/>
            <person name="Lloyd C."/>
            <person name="Lloyd D.M."/>
            <person name="Loulseged H."/>
            <person name="Loveland J.E."/>
            <person name="Lovell J.D."/>
            <person name="Lozado R."/>
            <person name="Lu J."/>
            <person name="Lyne R."/>
            <person name="Ma J."/>
            <person name="Maheshwari M."/>
            <person name="Matthews L.H."/>
            <person name="McDowall J."/>
            <person name="McLaren S."/>
            <person name="McMurray A."/>
            <person name="Meidl P."/>
            <person name="Meitinger T."/>
            <person name="Milne S."/>
            <person name="Miner G."/>
            <person name="Mistry S.L."/>
            <person name="Morgan M."/>
            <person name="Morris S."/>
            <person name="Mueller I."/>
            <person name="Mullikin J.C."/>
            <person name="Nguyen N."/>
            <person name="Nordsiek G."/>
            <person name="Nyakatura G."/>
            <person name="O'dell C.N."/>
            <person name="Okwuonu G."/>
            <person name="Palmer S."/>
            <person name="Pandian R."/>
            <person name="Parker D."/>
            <person name="Parrish J."/>
            <person name="Pasternak S."/>
            <person name="Patel D."/>
            <person name="Pearce A.V."/>
            <person name="Pearson D.M."/>
            <person name="Pelan S.E."/>
            <person name="Perez L."/>
            <person name="Porter K.M."/>
            <person name="Ramsey Y."/>
            <person name="Reichwald K."/>
            <person name="Rhodes S."/>
            <person name="Ridler K.A."/>
            <person name="Schlessinger D."/>
            <person name="Schueler M.G."/>
            <person name="Sehra H.K."/>
            <person name="Shaw-Smith C."/>
            <person name="Shen H."/>
            <person name="Sheridan E.M."/>
            <person name="Shownkeen R."/>
            <person name="Skuce C.D."/>
            <person name="Smith M.L."/>
            <person name="Sotheran E.C."/>
            <person name="Steingruber H.E."/>
            <person name="Steward C.A."/>
            <person name="Storey R."/>
            <person name="Swann R.M."/>
            <person name="Swarbreck D."/>
            <person name="Tabor P.E."/>
            <person name="Taudien S."/>
            <person name="Taylor T."/>
            <person name="Teague B."/>
            <person name="Thomas K."/>
            <person name="Thorpe A."/>
            <person name="Timms K."/>
            <person name="Tracey A."/>
            <person name="Trevanion S."/>
            <person name="Tromans A.C."/>
            <person name="d'Urso M."/>
            <person name="Verduzco D."/>
            <person name="Villasana D."/>
            <person name="Waldron L."/>
            <person name="Wall M."/>
            <person name="Wang Q."/>
            <person name="Warren J."/>
            <person name="Warry G.L."/>
            <person name="Wei X."/>
            <person name="West A."/>
            <person name="Whitehead S.L."/>
            <person name="Whiteley M.N."/>
            <person name="Wilkinson J.E."/>
            <person name="Willey D.L."/>
            <person name="Williams G."/>
            <person name="Williams L."/>
            <person name="Williamson A."/>
            <person name="Williamson H."/>
            <person name="Wilming L."/>
            <person name="Woodmansey R.L."/>
            <person name="Wray P.W."/>
            <person name="Yen J."/>
            <person name="Zhang J."/>
            <person name="Zhou J."/>
            <person name="Zoghbi H."/>
            <person name="Zorilla S."/>
            <person name="Buck D."/>
            <person name="Reinhardt R."/>
            <person name="Poustka A."/>
            <person name="Rosenthal A."/>
            <person name="Lehrach H."/>
            <person name="Meindl A."/>
            <person name="Minx P.J."/>
            <person name="Hillier L.W."/>
            <person name="Willard H.F."/>
            <person name="Wilson R.K."/>
            <person name="Waterston R.H."/>
            <person name="Rice C.M."/>
            <person name="Vaudin M."/>
            <person name="Coulson A."/>
            <person name="Nelson D.L."/>
            <person name="Weinstock G."/>
            <person name="Sulston J.E."/>
            <person name="Durbin R.M."/>
            <person name="Hubbard T."/>
            <person name="Gibbs R.A."/>
            <person name="Beck S."/>
            <person name="Rogers J."/>
            <person name="Bentley D.R."/>
        </authorList>
    </citation>
    <scope>NUCLEOTIDE SEQUENCE [LARGE SCALE GENOMIC DNA]</scope>
</reference>
<reference key="5">
    <citation type="journal article" date="1996" name="J. Leukoc. Biol.">
        <title>Differential screening leads to novel genetic markers of monocyte to macrophage maturation.</title>
        <authorList>
            <person name="Krause S.W."/>
            <person name="Rehli M."/>
            <person name="Kreutz M."/>
            <person name="Schwarzfischer L."/>
            <person name="Paulauskis J.D."/>
            <person name="Andreesen J.D."/>
        </authorList>
    </citation>
    <scope>NUCLEOTIDE SEQUENCE [MRNA] OF 339-789</scope>
</reference>
<reference key="6">
    <citation type="journal article" date="2004" name="Am. J. Hum. Genet.">
        <title>Mutations of CDKL5 cause a severe neurodevelopmental disorder with infantile spasms and mental retardation.</title>
        <authorList>
            <person name="Weaving L.S."/>
            <person name="Christodoulou J."/>
            <person name="Williamson S.L."/>
            <person name="Friend K.L."/>
            <person name="McKenzie O.L.D."/>
            <person name="Archer H."/>
            <person name="Evans J."/>
            <person name="Clarke A."/>
            <person name="Pelka G.J."/>
            <person name="Tam P.P.L."/>
            <person name="Watson C."/>
            <person name="Lahooti H."/>
            <person name="Ellaway C.J."/>
            <person name="Bennetts B."/>
            <person name="Leonard H."/>
            <person name="Gecz J."/>
        </authorList>
    </citation>
    <scope>INVOLVEMENT IN DEE2</scope>
</reference>
<reference key="7">
    <citation type="journal article" date="2005" name="Hum. Mol. Genet.">
        <title>CDKL5 belongs to the same molecular pathway of MeCP2 and it is responsible for the early-onset seizure variant of Rett syndrome.</title>
        <authorList>
            <person name="Mari F."/>
            <person name="Azimonti S."/>
            <person name="Bertani I."/>
            <person name="Bolognese F."/>
            <person name="Colombo E."/>
            <person name="Caselli R."/>
            <person name="Scala E."/>
            <person name="Longo I."/>
            <person name="Grosso S."/>
            <person name="Pescucci C."/>
            <person name="Ariani F."/>
            <person name="Hayek G."/>
            <person name="Balestri P."/>
            <person name="Bergo A."/>
            <person name="Badaracco G."/>
            <person name="Zappella M."/>
            <person name="Broccoli V."/>
            <person name="Renieri A."/>
            <person name="Kilstrup-Nielsen C."/>
            <person name="Landsberger N."/>
        </authorList>
    </citation>
    <scope>INTERACTION WITH MECP2</scope>
    <scope>FUNCTION</scope>
    <scope>AUTOPHOSPHORYLATION</scope>
    <scope>INVOLVEMENT IN DEE2</scope>
</reference>
<reference key="8">
    <citation type="journal article" date="2006" name="J. Biol. Chem.">
        <title>Functional consequences of mutations in CDKL5, an X-linked gene involved in infantile spasms and mental retardation.</title>
        <authorList>
            <person name="Bertani I."/>
            <person name="Rusconi L."/>
            <person name="Bolognese F."/>
            <person name="Forlani G."/>
            <person name="Conca B."/>
            <person name="De Monte L."/>
            <person name="Badaracco G."/>
            <person name="Landsberger N."/>
            <person name="Kilstrup-Nielsen C."/>
        </authorList>
    </citation>
    <scope>FUNCTION</scope>
    <scope>AUTOPHOSPHORYLATION</scope>
    <scope>SUBCELLULAR LOCATION</scope>
    <scope>CHARACTERIZATION OF VARIANTS DEE2 PHE-152 AND SER-175</scope>
</reference>
<reference key="9">
    <citation type="journal article" date="2008" name="Mol. Cell">
        <title>Kinase-selective enrichment enables quantitative phosphoproteomics of the kinome across the cell cycle.</title>
        <authorList>
            <person name="Daub H."/>
            <person name="Olsen J.V."/>
            <person name="Bairlein M."/>
            <person name="Gnad F."/>
            <person name="Oppermann F.S."/>
            <person name="Korner R."/>
            <person name="Greff Z."/>
            <person name="Keri G."/>
            <person name="Stemmann O."/>
            <person name="Mann M."/>
        </authorList>
    </citation>
    <scope>PHOSPHORYLATION [LARGE SCALE ANALYSIS] AT SER-407 AND SER-761</scope>
    <scope>IDENTIFICATION BY MASS SPECTROMETRY [LARGE SCALE ANALYSIS]</scope>
    <source>
        <tissue>Cervix carcinoma</tissue>
    </source>
</reference>
<reference key="10">
    <citation type="journal article" date="2008" name="Proc. Natl. Acad. Sci. U.S.A.">
        <title>A quantitative atlas of mitotic phosphorylation.</title>
        <authorList>
            <person name="Dephoure N."/>
            <person name="Zhou C."/>
            <person name="Villen J."/>
            <person name="Beausoleil S.A."/>
            <person name="Bakalarski C.E."/>
            <person name="Elledge S.J."/>
            <person name="Gygi S.P."/>
        </authorList>
    </citation>
    <scope>PHOSPHORYLATION [LARGE SCALE ANALYSIS] AT SER-407</scope>
    <scope>IDENTIFICATION BY MASS SPECTROMETRY [LARGE SCALE ANALYSIS]</scope>
    <source>
        <tissue>Cervix carcinoma</tissue>
    </source>
</reference>
<reference key="11">
    <citation type="journal article" date="2009" name="Mol. Cell. Proteomics">
        <title>Large-scale proteomics analysis of the human kinome.</title>
        <authorList>
            <person name="Oppermann F.S."/>
            <person name="Gnad F."/>
            <person name="Olsen J.V."/>
            <person name="Hornberger R."/>
            <person name="Greff Z."/>
            <person name="Keri G."/>
            <person name="Mann M."/>
            <person name="Daub H."/>
        </authorList>
    </citation>
    <scope>PHOSPHORYLATION [LARGE SCALE ANALYSIS] AT SER-407 AND SER-720</scope>
    <scope>IDENTIFICATION BY MASS SPECTROMETRY [LARGE SCALE ANALYSIS]</scope>
</reference>
<reference key="12">
    <citation type="journal article" date="2010" name="Sci. Signal.">
        <title>Quantitative phosphoproteomics reveals widespread full phosphorylation site occupancy during mitosis.</title>
        <authorList>
            <person name="Olsen J.V."/>
            <person name="Vermeulen M."/>
            <person name="Santamaria A."/>
            <person name="Kumar C."/>
            <person name="Miller M.L."/>
            <person name="Jensen L.J."/>
            <person name="Gnad F."/>
            <person name="Cox J."/>
            <person name="Jensen T.S."/>
            <person name="Nigg E.A."/>
            <person name="Brunak S."/>
            <person name="Mann M."/>
        </authorList>
    </citation>
    <scope>PHOSPHORYLATION [LARGE SCALE ANALYSIS] AT SER-407</scope>
    <scope>IDENTIFICATION BY MASS SPECTROMETRY [LARGE SCALE ANALYSIS]</scope>
    <source>
        <tissue>Cervix carcinoma</tissue>
    </source>
</reference>
<reference key="13">
    <citation type="journal article" date="2013" name="J. Proteome Res.">
        <title>Toward a comprehensive characterization of a human cancer cell phosphoproteome.</title>
        <authorList>
            <person name="Zhou H."/>
            <person name="Di Palma S."/>
            <person name="Preisinger C."/>
            <person name="Peng M."/>
            <person name="Polat A.N."/>
            <person name="Heck A.J."/>
            <person name="Mohammed S."/>
        </authorList>
    </citation>
    <scope>PHOSPHORYLATION [LARGE SCALE ANALYSIS] AT SER-479 AND SER-720</scope>
    <scope>IDENTIFICATION BY MASS SPECTROMETRY [LARGE SCALE ANALYSIS]</scope>
    <source>
        <tissue>Cervix carcinoma</tissue>
    </source>
</reference>
<reference evidence="29" key="14">
    <citation type="journal article" date="2018" name="Cell Rep.">
        <title>CDKL Family Kinases Have Evolved Distinct Structural Features and Ciliary Function.</title>
        <authorList>
            <person name="Canning P."/>
            <person name="Park K."/>
            <person name="Goncalves J."/>
            <person name="Li C."/>
            <person name="Howard C.J."/>
            <person name="Sharpe T.D."/>
            <person name="Holt L.J."/>
            <person name="Pelletier L."/>
            <person name="Bullock A.N."/>
            <person name="Leroux M.R."/>
        </authorList>
    </citation>
    <scope>X-RAY CRYSTALLOGRAPHY (2.00 ANGSTROMS) OF 1-303 IN COMPLEX WITH SYNTHETIC INHIBITOR</scope>
    <scope>SUBCELLULAR LOCATION</scope>
    <scope>FUNCTION</scope>
</reference>
<reference key="15">
    <citation type="journal article" date="2004" name="Am. J. Hum. Genet.">
        <title>Mutations in the X-linked cyclin-dependent kinase-like 5 (CDKL5/STK9) gene are associated with severe neurodevelopmental retardation.</title>
        <authorList>
            <person name="Tao J."/>
            <person name="Van Esch H."/>
            <person name="Hagedorn-Greiwe M."/>
            <person name="Hoffmann K."/>
            <person name="Moser B."/>
            <person name="Raynaud M."/>
            <person name="Sperner J."/>
            <person name="Fryns J.-P."/>
            <person name="Schwinger E."/>
            <person name="Gecz J."/>
            <person name="Ropers H.-H."/>
            <person name="Kalscheuer V.M."/>
        </authorList>
    </citation>
    <scope>VARIANTS DEE2 PHE-152 AND SER-175</scope>
    <scope>VARIANT PRO-791</scope>
</reference>
<reference key="16">
    <citation type="journal article" date="2005" name="J. Med. Genet.">
        <title>CDKL5/STK9 is mutated in Rett syndrome variant with infantile spasms.</title>
        <authorList>
            <person name="Scala E."/>
            <person name="Ariani F."/>
            <person name="Mari F."/>
            <person name="Caselli R."/>
            <person name="Pescucci C."/>
            <person name="Longo I."/>
            <person name="Meloni I."/>
            <person name="Giachino D."/>
            <person name="Bruttini M."/>
            <person name="Hayek G."/>
            <person name="Zappella M."/>
            <person name="Renieri A."/>
        </authorList>
    </citation>
    <scope>INVOLVEMENT IN DEE2</scope>
</reference>
<reference key="17">
    <citation type="journal article" date="2005" name="Eur. J. Hum. Genet.">
        <title>Early onset seizures and Rett-like features associated with mutations in CDKL5.</title>
        <authorList>
            <person name="Evans J.C."/>
            <person name="Archer H.L."/>
            <person name="Colley J.P."/>
            <person name="Ravn K."/>
            <person name="Nielsen J.B."/>
            <person name="Kerr A."/>
            <person name="Williams E."/>
            <person name="Christodoulou J."/>
            <person name="Gecz J."/>
            <person name="Jardine P.E."/>
            <person name="Wright M.J."/>
            <person name="Pilz D.T."/>
            <person name="Lazarou L."/>
            <person name="Cooper D.N."/>
            <person name="Sampson J.R."/>
            <person name="Butler R."/>
            <person name="Whatley S.D."/>
            <person name="Clarke A.J."/>
        </authorList>
    </citation>
    <scope>VARIANT DEE2 ASN-72</scope>
    <scope>VARIANT CYS-444</scope>
</reference>
<reference key="18">
    <citation type="journal article" date="2006" name="J. Med. Genet.">
        <title>CDKL5 mutations cause infantile spasms, early onset seizures, and severe mental retardation in female patients.</title>
        <authorList>
            <person name="Archer H.L."/>
            <person name="Evans J."/>
            <person name="Edwards S."/>
            <person name="Colley J."/>
            <person name="Newbury-Ecob R."/>
            <person name="O'Callaghan F."/>
            <person name="Huyton M."/>
            <person name="O'Regan M."/>
            <person name="Tolmie J."/>
            <person name="Sampson J."/>
            <person name="Clarke A."/>
            <person name="Osborne J."/>
        </authorList>
    </citation>
    <scope>VARIANTS DEE2 LEU-180 AND ALA-793</scope>
</reference>
<reference key="19">
    <citation type="journal article" date="2006" name="Science">
        <title>The consensus coding sequences of human breast and colorectal cancers.</title>
        <authorList>
            <person name="Sjoeblom T."/>
            <person name="Jones S."/>
            <person name="Wood L.D."/>
            <person name="Parsons D.W."/>
            <person name="Lin J."/>
            <person name="Barber T.D."/>
            <person name="Mandelker D."/>
            <person name="Leary R.J."/>
            <person name="Ptak J."/>
            <person name="Silliman N."/>
            <person name="Szabo S."/>
            <person name="Buckhaults P."/>
            <person name="Farrell C."/>
            <person name="Meeh P."/>
            <person name="Markowitz S.D."/>
            <person name="Willis J."/>
            <person name="Dawson D."/>
            <person name="Willson J.K.V."/>
            <person name="Gazdar A.F."/>
            <person name="Hartigan J."/>
            <person name="Wu L."/>
            <person name="Liu C."/>
            <person name="Parmigiani G."/>
            <person name="Park B.H."/>
            <person name="Bachman K.E."/>
            <person name="Papadopoulos N."/>
            <person name="Vogelstein B."/>
            <person name="Kinzler K.W."/>
            <person name="Velculescu V.E."/>
        </authorList>
    </citation>
    <scope>VARIANT [LARGE SCALE ANALYSIS] HIS-368</scope>
</reference>
<reference key="20">
    <citation type="journal article" date="2007" name="Nature">
        <title>Patterns of somatic mutation in human cancer genomes.</title>
        <authorList>
            <person name="Greenman C."/>
            <person name="Stephens P."/>
            <person name="Smith R."/>
            <person name="Dalgliesh G.L."/>
            <person name="Hunter C."/>
            <person name="Bignell G."/>
            <person name="Davies H."/>
            <person name="Teague J."/>
            <person name="Butler A."/>
            <person name="Stevens C."/>
            <person name="Edkins S."/>
            <person name="O'Meara S."/>
            <person name="Vastrik I."/>
            <person name="Schmidt E.E."/>
            <person name="Avis T."/>
            <person name="Barthorpe S."/>
            <person name="Bhamra G."/>
            <person name="Buck G."/>
            <person name="Choudhury B."/>
            <person name="Clements J."/>
            <person name="Cole J."/>
            <person name="Dicks E."/>
            <person name="Forbes S."/>
            <person name="Gray K."/>
            <person name="Halliday K."/>
            <person name="Harrison R."/>
            <person name="Hills K."/>
            <person name="Hinton J."/>
            <person name="Jenkinson A."/>
            <person name="Jones D."/>
            <person name="Menzies A."/>
            <person name="Mironenko T."/>
            <person name="Perry J."/>
            <person name="Raine K."/>
            <person name="Richardson D."/>
            <person name="Shepherd R."/>
            <person name="Small A."/>
            <person name="Tofts C."/>
            <person name="Varian J."/>
            <person name="Webb T."/>
            <person name="West S."/>
            <person name="Widaa S."/>
            <person name="Yates A."/>
            <person name="Cahill D.P."/>
            <person name="Louis D.N."/>
            <person name="Goldstraw P."/>
            <person name="Nicholson A.G."/>
            <person name="Brasseur F."/>
            <person name="Looijenga L."/>
            <person name="Weber B.L."/>
            <person name="Chiew Y.-E."/>
            <person name="DeFazio A."/>
            <person name="Greaves M.F."/>
            <person name="Green A.R."/>
            <person name="Campbell P."/>
            <person name="Birney E."/>
            <person name="Easton D.F."/>
            <person name="Chenevix-Trench G."/>
            <person name="Tan M.-H."/>
            <person name="Khoo S.K."/>
            <person name="Teh B.T."/>
            <person name="Yuen S.T."/>
            <person name="Leung S.Y."/>
            <person name="Wooster R."/>
            <person name="Futreal P.A."/>
            <person name="Stratton M.R."/>
        </authorList>
    </citation>
    <scope>VARIANTS [LARGE SCALE ANALYSIS] THR-374; GLN-574; ALA-734; PRO-791 AND GLY-1023 (ISOFORM 2)</scope>
</reference>
<reference key="21">
    <citation type="journal article" date="2008" name="Brain">
        <title>Key clinical features to identify girls with CDKL5 mutations.</title>
        <authorList>
            <person name="Bahi-Buisson N."/>
            <person name="Nectoux J."/>
            <person name="Rosas-Vargas H."/>
            <person name="Milh M."/>
            <person name="Boddaert N."/>
            <person name="Girard B."/>
            <person name="Cances C."/>
            <person name="Ville D."/>
            <person name="Afenjar A."/>
            <person name="Rio M."/>
            <person name="Heron D."/>
            <person name="N'guyen Morel M.A."/>
            <person name="Arzimanoglou A."/>
            <person name="Philippe C."/>
            <person name="Jonveaux P."/>
            <person name="Chelly J."/>
            <person name="Bienvenu T."/>
        </authorList>
    </citation>
    <scope>VARIANTS DEE2 VAL-40; PRO-220 AND MET-718</scope>
</reference>
<reference key="22">
    <citation type="journal article" date="2008" name="J. Med. Genet.">
        <title>Impairment of CDKL5 nuclear localisation as a cause for severe infantile encephalopathy.</title>
        <authorList>
            <person name="Rosas-Vargas H."/>
            <person name="Bahi-Buisson N."/>
            <person name="Philippe C."/>
            <person name="Nectoux J."/>
            <person name="Girard B."/>
            <person name="N'Guyen Morel M.A."/>
            <person name="Gitiaux C."/>
            <person name="Lazaro L."/>
            <person name="Odent S."/>
            <person name="Jonveaux P."/>
            <person name="Chelly J."/>
            <person name="Bienvenu T."/>
        </authorList>
    </citation>
    <scope>VARIANTS DEE2 VAL-40 AND PRO-220</scope>
    <scope>CHARACTERIZATION OF VARIANTS DEE2 VAL-40 AND PRO-220</scope>
</reference>
<reference key="23">
    <citation type="journal article" date="2008" name="Neurology">
        <title>CDKL5 mutations in boys with severe encephalopathy and early-onset intractable epilepsy.</title>
        <authorList>
            <person name="Elia M."/>
            <person name="Falco M."/>
            <person name="Ferri R."/>
            <person name="Spalletta A."/>
            <person name="Bottitta M."/>
            <person name="Calabrese G."/>
            <person name="Carotenuto M."/>
            <person name="Musumeci S.A."/>
            <person name="Lo Giudice M."/>
            <person name="Fichera M."/>
        </authorList>
    </citation>
    <scope>VARIANTS DEE2 PRO-178; ILE-288 AND TYR-291</scope>
</reference>
<reference key="24">
    <citation type="journal article" date="2009" name="Am. J. Med. Genet. A">
        <title>A novel mutation in the X-linked cyclin-dependent kinase-like 5 (CDKL5) gene associated with a severe Rett phenotype.</title>
        <authorList>
            <person name="Sprovieri T."/>
            <person name="Conforti F.L."/>
            <person name="Fiumara A."/>
            <person name="Mazzei R."/>
            <person name="Ungaro C."/>
            <person name="Citrigno L."/>
            <person name="Muglia M."/>
            <person name="Arena A."/>
            <person name="Quattrone A."/>
        </authorList>
    </citation>
    <scope>VARIANT DEE2 THR-399</scope>
</reference>
<reference key="25">
    <citation type="journal article" date="2009" name="Neurogenetics">
        <title>Novel mutations in the CDKL5 gene, predicted effects and associated phenotypes.</title>
        <authorList>
            <person name="Russo S."/>
            <person name="Marchi M."/>
            <person name="Cogliati F."/>
            <person name="Bonati M.T."/>
            <person name="Pintaudi M."/>
            <person name="Veneselli E."/>
            <person name="Saletti V."/>
            <person name="Balestrini M."/>
            <person name="Ben-Zeev B."/>
            <person name="Larizza L."/>
        </authorList>
    </citation>
    <scope>VARIANTS DEE2 THR-72 AND ARG-127</scope>
    <scope>VARIANTS PRO-791 AND CYS-923 (ISOFORM 2)</scope>
</reference>
<reference key="26">
    <citation type="journal article" date="2013" name="Epilepsia">
        <title>Targeted capture and sequencing for detection of mutations causing early onset epileptic encephalopathy.</title>
        <authorList>
            <person name="Kodera H."/>
            <person name="Kato M."/>
            <person name="Nord A.S."/>
            <person name="Walsh T."/>
            <person name="Lee M."/>
            <person name="Yamanaka G."/>
            <person name="Tohyama J."/>
            <person name="Nakamura K."/>
            <person name="Nakagawa E."/>
            <person name="Ikeda T."/>
            <person name="Ben-Zeev B."/>
            <person name="Lev D."/>
            <person name="Lerman-Sagie T."/>
            <person name="Straussberg R."/>
            <person name="Tanabe S."/>
            <person name="Ueda K."/>
            <person name="Amamoto M."/>
            <person name="Ohta S."/>
            <person name="Nonoda Y."/>
            <person name="Nishiyama K."/>
            <person name="Tsurusaki Y."/>
            <person name="Nakashima M."/>
            <person name="Miyake N."/>
            <person name="Hayasaka K."/>
            <person name="King M.C."/>
            <person name="Matsumoto N."/>
            <person name="Saitsu H."/>
        </authorList>
    </citation>
    <scope>VARIANT DEE2 GLN-178</scope>
</reference>
<reference key="27">
    <citation type="journal article" date="2013" name="Nat. Genet.">
        <title>Targeted resequencing in epileptic encephalopathies identifies de novo mutations in CHD2 and SYNGAP1.</title>
        <authorList>
            <person name="Carvill G.L."/>
            <person name="Heavin S.B."/>
            <person name="Yendle S.C."/>
            <person name="McMahon J.M."/>
            <person name="O'Roak B.J."/>
            <person name="Cook J."/>
            <person name="Khan A."/>
            <person name="Dorschner M.O."/>
            <person name="Weaver M."/>
            <person name="Calvert S."/>
            <person name="Malone S."/>
            <person name="Wallace G."/>
            <person name="Stanley T."/>
            <person name="Bye A.M."/>
            <person name="Bleasel A."/>
            <person name="Howell K.B."/>
            <person name="Kivity S."/>
            <person name="Mackay M.T."/>
            <person name="Rodriguez-Casero V."/>
            <person name="Webster R."/>
            <person name="Korczyn A."/>
            <person name="Afawi Z."/>
            <person name="Zelnick N."/>
            <person name="Lerman-Sagie T."/>
            <person name="Lev D."/>
            <person name="Moeller R.S."/>
            <person name="Gill D."/>
            <person name="Andrade D.M."/>
            <person name="Freeman J.L."/>
            <person name="Sadleir L.G."/>
            <person name="Shendure J."/>
            <person name="Berkovic S.F."/>
            <person name="Scheffer I.E."/>
            <person name="Mefford H.C."/>
        </authorList>
    </citation>
    <scope>VARIANTS DEE2 TYR-145; GLN-178; PRO-182; GLU-207; TYR-581 AND CYS-858</scope>
    <scope>VARIANT 855-SER--LYS-960 DEL</scope>
</reference>
<reference key="28">
    <citation type="journal article" date="2014" name="BMC Med. Genet.">
        <title>Clinical features and gene mutational spectrum of CDKL5-related diseases in a cohort of Chinese patients.</title>
        <authorList>
            <person name="Zhao Y."/>
            <person name="Zhang X."/>
            <person name="Bao X."/>
            <person name="Zhang Q."/>
            <person name="Zhang J."/>
            <person name="Cao G."/>
            <person name="Zhang J."/>
            <person name="Li J."/>
            <person name="Wei L."/>
            <person name="Pan H."/>
            <person name="Wu X."/>
        </authorList>
    </citation>
    <scope>VARIANT DEE2 GLN-178</scope>
</reference>
<reference key="29">
    <citation type="journal article" date="2015" name="Mol. Autism">
        <title>Integrated analysis of whole-exome sequencing and transcriptome profiling in males with autism spectrum disorders.</title>
        <authorList>
            <person name="Codina-Sola M."/>
            <person name="Rodriguez-Santiago B."/>
            <person name="Homs A."/>
            <person name="Santoyo J."/>
            <person name="Rigau M."/>
            <person name="Aznar-Lain G."/>
            <person name="Del Campo M."/>
            <person name="Gener B."/>
            <person name="Gabau E."/>
            <person name="Botella M.P."/>
            <person name="Gutierrez-Arumi A."/>
            <person name="Antinolo G."/>
            <person name="Perez-Jurado L.A."/>
            <person name="Cusco I."/>
        </authorList>
    </citation>
    <scope>VARIANT LEU-647</scope>
</reference>
<reference key="30">
    <citation type="journal article" date="2016" name="J. Med. Genet.">
        <title>Improving diagnosis and broadening the phenotypes in early-onset seizure and severe developmental delay disorders through gene panel analysis.</title>
        <authorList>
            <person name="Trump N."/>
            <person name="McTague A."/>
            <person name="Brittain H."/>
            <person name="Papandreou A."/>
            <person name="Meyer E."/>
            <person name="Ngoh A."/>
            <person name="Palmer R."/>
            <person name="Morrogh D."/>
            <person name="Boustred C."/>
            <person name="Hurst J.A."/>
            <person name="Jenkins L."/>
            <person name="Kurian M.A."/>
            <person name="Scott R.H."/>
        </authorList>
    </citation>
    <scope>VARIANTS DEE2 TRP-178; MET-718 AND 726-SER--LYS-1030 DEL</scope>
</reference>
<reference key="31">
    <citation type="journal article" date="2017" name="Hum. Mutat.">
        <title>Diagnostic targeted resequencing in 349 patients with drug-resistant pediatric epilepsies identifies causative mutations in 30 different genes.</title>
        <authorList>
            <consortium name="Clinical Study Group"/>
            <person name="Parrini E."/>
            <person name="Marini C."/>
            <person name="Mei D."/>
            <person name="Galuppi A."/>
            <person name="Cellini E."/>
            <person name="Pucatti D."/>
            <person name="Chiti L."/>
            <person name="Rutigliano D."/>
            <person name="Bianchini C."/>
            <person name="Virdo S."/>
            <person name="De Vita D."/>
            <person name="Bigoni S."/>
            <person name="Barba C."/>
            <person name="Mari F."/>
            <person name="Montomoli M."/>
            <person name="Pisano T."/>
            <person name="Rosati A."/>
            <person name="Guerrini R."/>
        </authorList>
    </citation>
    <scope>VARIANTS DEE2 LEU-196 AND ARG-994 (ISOFORM 2)</scope>
</reference>
<feature type="chain" id="PRO_0000085826" description="Cyclin-dependent kinase-like 5">
    <location>
        <begin position="1"/>
        <end position="960"/>
    </location>
</feature>
<feature type="domain" description="Protein kinase" evidence="1">
    <location>
        <begin position="13"/>
        <end position="297"/>
    </location>
</feature>
<feature type="region of interest" description="Disordered" evidence="3">
    <location>
        <begin position="300"/>
        <end position="349"/>
    </location>
</feature>
<feature type="region of interest" description="Disordered" evidence="3">
    <location>
        <begin position="382"/>
        <end position="566"/>
    </location>
</feature>
<feature type="region of interest" description="Disordered" evidence="3">
    <location>
        <begin position="646"/>
        <end position="834"/>
    </location>
</feature>
<feature type="region of interest" description="Disordered" evidence="3">
    <location>
        <begin position="848"/>
        <end position="960"/>
    </location>
</feature>
<feature type="compositionally biased region" description="Polar residues" evidence="3">
    <location>
        <begin position="319"/>
        <end position="336"/>
    </location>
</feature>
<feature type="compositionally biased region" description="Polar residues" evidence="3">
    <location>
        <begin position="382"/>
        <end position="402"/>
    </location>
</feature>
<feature type="compositionally biased region" description="Basic and acidic residues" evidence="3">
    <location>
        <begin position="407"/>
        <end position="417"/>
    </location>
</feature>
<feature type="compositionally biased region" description="Polar residues" evidence="3">
    <location>
        <begin position="434"/>
        <end position="462"/>
    </location>
</feature>
<feature type="compositionally biased region" description="Polar residues" evidence="3">
    <location>
        <begin position="473"/>
        <end position="482"/>
    </location>
</feature>
<feature type="compositionally biased region" description="Polar residues" evidence="3">
    <location>
        <begin position="510"/>
        <end position="548"/>
    </location>
</feature>
<feature type="compositionally biased region" description="Basic and acidic residues" evidence="3">
    <location>
        <begin position="549"/>
        <end position="559"/>
    </location>
</feature>
<feature type="compositionally biased region" description="Basic and acidic residues" evidence="3">
    <location>
        <begin position="679"/>
        <end position="704"/>
    </location>
</feature>
<feature type="compositionally biased region" description="Polar residues" evidence="3">
    <location>
        <begin position="728"/>
        <end position="748"/>
    </location>
</feature>
<feature type="compositionally biased region" description="Basic and acidic residues" evidence="3">
    <location>
        <begin position="769"/>
        <end position="778"/>
    </location>
</feature>
<feature type="compositionally biased region" description="Polar residues" evidence="3">
    <location>
        <begin position="791"/>
        <end position="816"/>
    </location>
</feature>
<feature type="compositionally biased region" description="Basic and acidic residues" evidence="3">
    <location>
        <begin position="817"/>
        <end position="827"/>
    </location>
</feature>
<feature type="compositionally biased region" description="Polar residues" evidence="3">
    <location>
        <begin position="862"/>
        <end position="872"/>
    </location>
</feature>
<feature type="compositionally biased region" description="Polar residues" evidence="3">
    <location>
        <begin position="880"/>
        <end position="890"/>
    </location>
</feature>
<feature type="compositionally biased region" description="Polar residues" evidence="3">
    <location>
        <begin position="914"/>
        <end position="928"/>
    </location>
</feature>
<feature type="active site" description="Proton acceptor" evidence="1 2">
    <location>
        <position position="135"/>
    </location>
</feature>
<feature type="binding site" evidence="1">
    <location>
        <begin position="19"/>
        <end position="27"/>
    </location>
    <ligand>
        <name>ATP</name>
        <dbReference type="ChEBI" id="CHEBI:30616"/>
    </ligand>
</feature>
<feature type="binding site" evidence="1">
    <location>
        <position position="42"/>
    </location>
    <ligand>
        <name>ATP</name>
        <dbReference type="ChEBI" id="CHEBI:30616"/>
    </ligand>
</feature>
<feature type="modified residue" description="Phosphoserine" evidence="30 31 32 33">
    <location>
        <position position="407"/>
    </location>
</feature>
<feature type="modified residue" description="Phosphoserine" evidence="34">
    <location>
        <position position="479"/>
    </location>
</feature>
<feature type="modified residue" description="Phosphoserine" evidence="32 34">
    <location>
        <position position="720"/>
    </location>
</feature>
<feature type="modified residue" description="Phosphoserine" evidence="31">
    <location>
        <position position="761"/>
    </location>
</feature>
<feature type="splice variant" id="VSP_060755" description="In isoform 2." evidence="19">
    <original>GQMDPGWHVSSVTRSATEGPSYSEQLGAKSGPNGHPYNRTNRSRMPNLNDLKETAL</original>
    <variation>DGGCDGRRQRHHSGPQDRRFMLRTTEQQGEYFCCGDPKKPHTPCVPNRALHRPISSPAPYPVLQVRGTSMCPTLQVRGTDAFSCPTQQSGFSFFVRHVMREALIHRAQVNQAALLTYHENAALTGK</variation>
    <location>
        <begin position="905"/>
        <end position="960"/>
    </location>
</feature>
<feature type="sequence variant" id="VAR_058022" description="In DEE2; causes mislocalization of the protein in the cytoplasm; dbSNP:rs122460159." evidence="14 15">
    <original>A</original>
    <variation>V</variation>
    <location>
        <position position="40"/>
    </location>
</feature>
<feature type="sequence variant" id="VAR_058023" description="In DEE2; dbSNP:rs62641235." evidence="9">
    <original>I</original>
    <variation>N</variation>
    <location>
        <position position="72"/>
    </location>
</feature>
<feature type="sequence variant" id="VAR_058024" description="In DEE2; dbSNP:rs62641235." evidence="17">
    <original>I</original>
    <variation>T</variation>
    <location>
        <position position="72"/>
    </location>
</feature>
<feature type="sequence variant" id="VAR_058025" description="In DEE2; dbSNP:rs267608468." evidence="17">
    <original>H</original>
    <variation>R</variation>
    <location>
        <position position="127"/>
    </location>
</feature>
<feature type="sequence variant" id="VAR_078625" description="In DEE2; uncertain significance." evidence="21">
    <original>H</original>
    <variation>Y</variation>
    <location>
        <position position="145"/>
    </location>
</feature>
<feature type="sequence variant" id="VAR_023560" description="In DEE2; affect activity; causes mislocalization of the protein in the cytoplasm; dbSNP:rs122460157." evidence="6 11">
    <original>C</original>
    <variation>F</variation>
    <location>
        <position position="152"/>
    </location>
</feature>
<feature type="sequence variant" id="VAR_023561" description="In DEE2; affect activity; does not affect the cellular distribution of the protein; dbSNP:rs61749700." evidence="6 11">
    <original>R</original>
    <variation>S</variation>
    <location>
        <position position="175"/>
    </location>
</feature>
<feature type="sequence variant" id="VAR_058026" description="In DEE2; dbSNP:rs267606715." evidence="16">
    <original>R</original>
    <variation>P</variation>
    <location>
        <position position="178"/>
    </location>
</feature>
<feature type="sequence variant" id="VAR_071103" description="In DEE2; dbSNP:rs267606715." evidence="20 21 22">
    <original>R</original>
    <variation>Q</variation>
    <location>
        <position position="178"/>
    </location>
</feature>
<feature type="sequence variant" id="VAR_078712" description="In DEE2; dbSNP:rs267608493." evidence="24">
    <original>R</original>
    <variation>W</variation>
    <location>
        <position position="178"/>
    </location>
</feature>
<feature type="sequence variant" id="VAR_037635" description="In DEE2; dbSNP:rs61749704." evidence="10">
    <original>P</original>
    <variation>L</variation>
    <location>
        <position position="180"/>
    </location>
</feature>
<feature type="sequence variant" id="VAR_078626" description="In DEE2; dbSNP:rs2147145603." evidence="21">
    <original>L</original>
    <variation>P</variation>
    <location>
        <position position="182"/>
    </location>
</feature>
<feature type="sequence variant" id="VAR_078219" description="In DEE2; dbSNP:rs267608501." evidence="25">
    <original>S</original>
    <variation>L</variation>
    <location>
        <position position="196"/>
    </location>
</feature>
<feature type="sequence variant" id="VAR_078627" description="In DEE2." evidence="21">
    <original>G</original>
    <variation>E</variation>
    <location>
        <position position="207"/>
    </location>
</feature>
<feature type="sequence variant" id="VAR_058027" description="In DEE2; causes mislocalization of the protein in the cytoplasm; dbSNP:rs267608511." evidence="14 15">
    <original>L</original>
    <variation>P</variation>
    <location>
        <position position="220"/>
    </location>
</feature>
<feature type="sequence variant" id="VAR_058028" description="In DEE2; dbSNP:rs267606713." evidence="16">
    <original>T</original>
    <variation>I</variation>
    <location>
        <position position="288"/>
    </location>
</feature>
<feature type="sequence variant" id="VAR_058029" description="In DEE2; uncertain significance; dbSNP:rs267606714." evidence="16">
    <original>C</original>
    <variation>Y</variation>
    <location>
        <position position="291"/>
    </location>
</feature>
<feature type="sequence variant" id="VAR_036578" description="In a colorectal cancer sample; somatic mutation." evidence="12">
    <original>N</original>
    <variation>H</variation>
    <location>
        <position position="368"/>
    </location>
</feature>
<feature type="sequence variant" id="VAR_041997" description="In a metastatic melanoma sample; somatic mutation." evidence="13">
    <original>A</original>
    <variation>T</variation>
    <location>
        <position position="374"/>
    </location>
</feature>
<feature type="sequence variant" id="VAR_058030" description="In DEE2; likely benign; dbSNP:rs267608611." evidence="18">
    <original>N</original>
    <variation>T</variation>
    <location>
        <position position="399"/>
    </location>
</feature>
<feature type="sequence variant" id="VAR_058031" description="In dbSNP:rs61753977." evidence="9">
    <original>R</original>
    <variation>C</variation>
    <location>
        <position position="444"/>
    </location>
</feature>
<feature type="sequence variant" id="VAR_041998" description="In an ovarian serous carcinoma sample; somatic mutation; dbSNP:rs199897804." evidence="13">
    <original>P</original>
    <variation>Q</variation>
    <location>
        <position position="574"/>
    </location>
</feature>
<feature type="sequence variant" id="VAR_078628" description="In DEE2; uncertain significance." evidence="21">
    <original>H</original>
    <variation>Y</variation>
    <location>
        <position position="581"/>
    </location>
</feature>
<feature type="sequence variant" id="VAR_078713" description="Found in a patient with autism spectrum disorder; likely pathogenic." evidence="23">
    <original>P</original>
    <variation>L</variation>
    <location>
        <position position="647"/>
    </location>
</feature>
<feature type="sequence variant" id="VAR_058032" description="In DEE2; dbSNP:rs267608653." evidence="15 24">
    <original>V</original>
    <variation>M</variation>
    <location>
        <position position="718"/>
    </location>
</feature>
<feature type="sequence variant" id="VAR_078714" description="In DEE2." evidence="24">
    <location>
        <begin position="726"/>
        <end position="960"/>
    </location>
</feature>
<feature type="sequence variant" id="VAR_041999" description="In dbSNP:rs55803460." evidence="13">
    <original>T</original>
    <variation>A</variation>
    <location>
        <position position="734"/>
    </location>
</feature>
<feature type="sequence variant" id="VAR_023562" description="In dbSNP:rs35478150." evidence="4 6 13 17">
    <original>Q</original>
    <variation>P</variation>
    <location>
        <position position="791"/>
    </location>
</feature>
<feature type="sequence variant" id="VAR_037636" description="In DEE2; uncertain significance; dbSNP:rs62643617." evidence="10">
    <original>V</original>
    <variation>A</variation>
    <location>
        <position position="793"/>
    </location>
</feature>
<feature type="sequence variant" id="VAR_078629" description="Found in a patient with infatile spasms; likely pathogenic." evidence="21">
    <location>
        <begin position="855"/>
        <end position="960"/>
    </location>
</feature>
<feature type="sequence variant" id="VAR_078630" description="In DEE2; uncertain significance; dbSNP:rs773760466." evidence="21">
    <original>R</original>
    <variation>C</variation>
    <location>
        <position position="858"/>
    </location>
</feature>
<feature type="sequence conflict" description="In Ref. 5; CAA61445." evidence="27" ref="5">
    <original>HR</original>
    <variation>GT</variation>
    <location>
        <begin position="339"/>
        <end position="340"/>
    </location>
</feature>
<feature type="sequence conflict" description="In Ref. 5; CAA61445." evidence="27" ref="5">
    <original>L</original>
    <variation>W</variation>
    <location>
        <position position="541"/>
    </location>
</feature>
<feature type="sequence conflict" description="In Ref. 5; CAA61445." evidence="27" ref="5">
    <location>
        <begin position="731"/>
        <end position="764"/>
    </location>
</feature>
<feature type="turn" evidence="35">
    <location>
        <begin position="10"/>
        <end position="12"/>
    </location>
</feature>
<feature type="strand" evidence="35">
    <location>
        <begin position="13"/>
        <end position="24"/>
    </location>
</feature>
<feature type="strand" evidence="35">
    <location>
        <begin position="26"/>
        <end position="32"/>
    </location>
</feature>
<feature type="turn" evidence="35">
    <location>
        <begin position="33"/>
        <end position="35"/>
    </location>
</feature>
<feature type="strand" evidence="35">
    <location>
        <begin position="38"/>
        <end position="43"/>
    </location>
</feature>
<feature type="helix" evidence="35">
    <location>
        <begin position="55"/>
        <end position="66"/>
    </location>
</feature>
<feature type="strand" evidence="35">
    <location>
        <begin position="75"/>
        <end position="81"/>
    </location>
</feature>
<feature type="strand" evidence="35">
    <location>
        <begin position="84"/>
        <end position="90"/>
    </location>
</feature>
<feature type="strand" evidence="35">
    <location>
        <begin position="93"/>
        <end position="95"/>
    </location>
</feature>
<feature type="helix" evidence="35">
    <location>
        <begin position="96"/>
        <end position="102"/>
    </location>
</feature>
<feature type="helix" evidence="35">
    <location>
        <begin position="109"/>
        <end position="128"/>
    </location>
</feature>
<feature type="helix" evidence="35">
    <location>
        <begin position="138"/>
        <end position="140"/>
    </location>
</feature>
<feature type="strand" evidence="35">
    <location>
        <begin position="141"/>
        <end position="143"/>
    </location>
</feature>
<feature type="strand" evidence="35">
    <location>
        <begin position="149"/>
        <end position="151"/>
    </location>
</feature>
<feature type="strand" evidence="36">
    <location>
        <begin position="158"/>
        <end position="162"/>
    </location>
</feature>
<feature type="helix" evidence="36">
    <location>
        <begin position="172"/>
        <end position="175"/>
    </location>
</feature>
<feature type="helix" evidence="35">
    <location>
        <begin position="180"/>
        <end position="183"/>
    </location>
</feature>
<feature type="helix" evidence="35">
    <location>
        <begin position="191"/>
        <end position="206"/>
    </location>
</feature>
<feature type="helix" evidence="35">
    <location>
        <begin position="216"/>
        <end position="227"/>
    </location>
</feature>
<feature type="helix" evidence="35">
    <location>
        <begin position="232"/>
        <end position="240"/>
    </location>
</feature>
<feature type="helix" evidence="35">
    <location>
        <begin position="242"/>
        <end position="244"/>
    </location>
</feature>
<feature type="helix" evidence="35">
    <location>
        <begin position="258"/>
        <end position="262"/>
    </location>
</feature>
<feature type="turn" evidence="35">
    <location>
        <begin position="263"/>
        <end position="265"/>
    </location>
</feature>
<feature type="helix" evidence="35">
    <location>
        <begin position="268"/>
        <end position="277"/>
    </location>
</feature>
<feature type="helix" evidence="35">
    <location>
        <begin position="282"/>
        <end position="284"/>
    </location>
</feature>
<feature type="helix" evidence="35">
    <location>
        <begin position="288"/>
        <end position="292"/>
    </location>
</feature>
<feature type="helix" evidence="35">
    <location>
        <begin position="295"/>
        <end position="298"/>
    </location>
</feature>
<feature type="sequence variant" id="VAR_083796" description="In dbSNP:rs267608664." evidence="17">
    <original>R</original>
    <variation>C</variation>
    <location sequence="O76039-1">
        <position position="923"/>
    </location>
</feature>
<feature type="sequence variant" id="VAR_083797" description="In DEE2; uncertain significance; dbSNP:rs866859766." evidence="25">
    <original>G</original>
    <variation>R</variation>
    <location sequence="O76039-1">
        <position position="994"/>
    </location>
</feature>
<feature type="sequence variant" id="VAR_083798" description="In dbSNP:rs35693326.">
    <original>V</original>
    <variation>M</variation>
    <location sequence="O76039-1">
        <position position="999"/>
    </location>
</feature>
<feature type="sequence variant" id="VAR_083799" description="In dbSNP:rs34166184." evidence="13">
    <original>E</original>
    <variation>G</variation>
    <location sequence="O76039-1">
        <position position="1023"/>
    </location>
</feature>
<name>CDKL5_HUMAN</name>
<accession>O76039</accession>
<accession>G9B9X4</accession>
<accession>Q14198</accession>
<accession>Q5H985</accession>
<accession>Q8IYC7</accession>
<accession>Q9UJL6</accession>
<evidence type="ECO:0000255" key="1">
    <source>
        <dbReference type="PROSITE-ProRule" id="PRU00159"/>
    </source>
</evidence>
<evidence type="ECO:0000255" key="2">
    <source>
        <dbReference type="PROSITE-ProRule" id="PRU10027"/>
    </source>
</evidence>
<evidence type="ECO:0000256" key="3">
    <source>
        <dbReference type="SAM" id="MobiDB-lite"/>
    </source>
</evidence>
<evidence type="ECO:0000269" key="4">
    <source>
    </source>
</evidence>
<evidence type="ECO:0000269" key="5">
    <source>
    </source>
</evidence>
<evidence type="ECO:0000269" key="6">
    <source>
    </source>
</evidence>
<evidence type="ECO:0000269" key="7">
    <source>
    </source>
</evidence>
<evidence type="ECO:0000269" key="8">
    <source>
    </source>
</evidence>
<evidence type="ECO:0000269" key="9">
    <source>
    </source>
</evidence>
<evidence type="ECO:0000269" key="10">
    <source>
    </source>
</evidence>
<evidence type="ECO:0000269" key="11">
    <source>
    </source>
</evidence>
<evidence type="ECO:0000269" key="12">
    <source>
    </source>
</evidence>
<evidence type="ECO:0000269" key="13">
    <source>
    </source>
</evidence>
<evidence type="ECO:0000269" key="14">
    <source>
    </source>
</evidence>
<evidence type="ECO:0000269" key="15">
    <source>
    </source>
</evidence>
<evidence type="ECO:0000269" key="16">
    <source>
    </source>
</evidence>
<evidence type="ECO:0000269" key="17">
    <source>
    </source>
</evidence>
<evidence type="ECO:0000269" key="18">
    <source>
    </source>
</evidence>
<evidence type="ECO:0000269" key="19">
    <source>
    </source>
</evidence>
<evidence type="ECO:0000269" key="20">
    <source>
    </source>
</evidence>
<evidence type="ECO:0000269" key="21">
    <source>
    </source>
</evidence>
<evidence type="ECO:0000269" key="22">
    <source>
    </source>
</evidence>
<evidence type="ECO:0000269" key="23">
    <source>
    </source>
</evidence>
<evidence type="ECO:0000269" key="24">
    <source>
    </source>
</evidence>
<evidence type="ECO:0000269" key="25">
    <source>
    </source>
</evidence>
<evidence type="ECO:0000269" key="26">
    <source>
    </source>
</evidence>
<evidence type="ECO:0000305" key="27"/>
<evidence type="ECO:0000312" key="28">
    <source>
        <dbReference type="HGNC" id="HGNC:11411"/>
    </source>
</evidence>
<evidence type="ECO:0007744" key="29">
    <source>
        <dbReference type="PDB" id="4BGQ"/>
    </source>
</evidence>
<evidence type="ECO:0007744" key="30">
    <source>
    </source>
</evidence>
<evidence type="ECO:0007744" key="31">
    <source>
    </source>
</evidence>
<evidence type="ECO:0007744" key="32">
    <source>
    </source>
</evidence>
<evidence type="ECO:0007744" key="33">
    <source>
    </source>
</evidence>
<evidence type="ECO:0007744" key="34">
    <source>
    </source>
</evidence>
<evidence type="ECO:0007829" key="35">
    <source>
        <dbReference type="PDB" id="4BGQ"/>
    </source>
</evidence>
<evidence type="ECO:0007829" key="36">
    <source>
        <dbReference type="PDB" id="8CIE"/>
    </source>
</evidence>
<organism>
    <name type="scientific">Homo sapiens</name>
    <name type="common">Human</name>
    <dbReference type="NCBI Taxonomy" id="9606"/>
    <lineage>
        <taxon>Eukaryota</taxon>
        <taxon>Metazoa</taxon>
        <taxon>Chordata</taxon>
        <taxon>Craniata</taxon>
        <taxon>Vertebrata</taxon>
        <taxon>Euteleostomi</taxon>
        <taxon>Mammalia</taxon>
        <taxon>Eutheria</taxon>
        <taxon>Euarchontoglires</taxon>
        <taxon>Primates</taxon>
        <taxon>Haplorrhini</taxon>
        <taxon>Catarrhini</taxon>
        <taxon>Hominidae</taxon>
        <taxon>Homo</taxon>
    </lineage>
</organism>